<organism>
    <name type="scientific">Pongo abelii</name>
    <name type="common">Sumatran orangutan</name>
    <name type="synonym">Pongo pygmaeus abelii</name>
    <dbReference type="NCBI Taxonomy" id="9601"/>
    <lineage>
        <taxon>Eukaryota</taxon>
        <taxon>Metazoa</taxon>
        <taxon>Chordata</taxon>
        <taxon>Craniata</taxon>
        <taxon>Vertebrata</taxon>
        <taxon>Euteleostomi</taxon>
        <taxon>Mammalia</taxon>
        <taxon>Eutheria</taxon>
        <taxon>Euarchontoglires</taxon>
        <taxon>Primates</taxon>
        <taxon>Haplorrhini</taxon>
        <taxon>Catarrhini</taxon>
        <taxon>Hominidae</taxon>
        <taxon>Pongo</taxon>
    </lineage>
</organism>
<accession>Q5RBU4</accession>
<keyword id="KW-0053">Apoptosis</keyword>
<keyword id="KW-0963">Cytoplasm</keyword>
<keyword id="KW-0238">DNA-binding</keyword>
<keyword id="KW-1017">Isopeptide bond</keyword>
<keyword id="KW-0539">Nucleus</keyword>
<keyword id="KW-0597">Phosphoprotein</keyword>
<keyword id="KW-1185">Reference proteome</keyword>
<keyword id="KW-0678">Repressor</keyword>
<keyword id="KW-0694">RNA-binding</keyword>
<keyword id="KW-0698">rRNA processing</keyword>
<keyword id="KW-0804">Transcription</keyword>
<keyword id="KW-0805">Transcription regulation</keyword>
<keyword id="KW-0832">Ubl conjugation</keyword>
<feature type="chain" id="PRO_0000316302" description="Nuclear nucleic acid-binding protein C1D">
    <location>
        <begin position="1"/>
        <end position="141"/>
    </location>
</feature>
<feature type="region of interest" description="Required for transcriptional repression" evidence="1">
    <location>
        <begin position="1"/>
        <end position="100"/>
    </location>
</feature>
<feature type="region of interest" description="Interaction with NR1D1" evidence="1">
    <location>
        <begin position="50"/>
        <end position="100"/>
    </location>
</feature>
<feature type="region of interest" description="Interaction with NCOR1 and NCOR2" evidence="1">
    <location>
        <begin position="100"/>
        <end position="141"/>
    </location>
</feature>
<feature type="cross-link" description="Glycyl lysine isopeptide (Lys-Gly) (interchain with G-Cter in SUMO2)" evidence="3">
    <location>
        <position position="119"/>
    </location>
</feature>
<feature type="cross-link" description="Glycyl lysine isopeptide (Lys-Gly) (interchain with G-Cter in SUMO2)" evidence="3">
    <location>
        <position position="126"/>
    </location>
</feature>
<feature type="cross-link" description="Glycyl lysine isopeptide (Lys-Gly) (interchain with G-Cter in SUMO2)" evidence="3">
    <location>
        <position position="132"/>
    </location>
</feature>
<name>C1D_PONAB</name>
<dbReference type="EMBL" id="CR858539">
    <property type="protein sequence ID" value="CAH90766.1"/>
    <property type="molecule type" value="mRNA"/>
</dbReference>
<dbReference type="RefSeq" id="NP_001125429.1">
    <property type="nucleotide sequence ID" value="NM_001131957.1"/>
</dbReference>
<dbReference type="RefSeq" id="XP_009235499.1">
    <property type="nucleotide sequence ID" value="XM_009237224.3"/>
</dbReference>
<dbReference type="RefSeq" id="XP_024097670.2">
    <property type="nucleotide sequence ID" value="XM_024241902.3"/>
</dbReference>
<dbReference type="SMR" id="Q5RBU4"/>
<dbReference type="FunCoup" id="Q5RBU4">
    <property type="interactions" value="2573"/>
</dbReference>
<dbReference type="STRING" id="9601.ENSPPYP00000013776"/>
<dbReference type="Ensembl" id="ENSPPYT00000014335.3">
    <property type="protein sequence ID" value="ENSPPYP00000013776.3"/>
    <property type="gene ID" value="ENSPPYG00000012354.3"/>
</dbReference>
<dbReference type="GeneID" id="100172337"/>
<dbReference type="KEGG" id="pon:100172337"/>
<dbReference type="CTD" id="10438"/>
<dbReference type="eggNOG" id="KOG4835">
    <property type="taxonomic scope" value="Eukaryota"/>
</dbReference>
<dbReference type="GeneTree" id="ENSGT00390000015405"/>
<dbReference type="HOGENOM" id="CLU_064339_4_1_1"/>
<dbReference type="InParanoid" id="Q5RBU4"/>
<dbReference type="OrthoDB" id="1421013at2759"/>
<dbReference type="Proteomes" id="UP000001595">
    <property type="component" value="Chromosome 2A"/>
</dbReference>
<dbReference type="GO" id="GO:0005737">
    <property type="term" value="C:cytoplasm"/>
    <property type="evidence" value="ECO:0007669"/>
    <property type="project" value="UniProtKB-SubCell"/>
</dbReference>
<dbReference type="GO" id="GO:0000178">
    <property type="term" value="C:exosome (RNase complex)"/>
    <property type="evidence" value="ECO:0007669"/>
    <property type="project" value="TreeGrafter"/>
</dbReference>
<dbReference type="GO" id="GO:0005730">
    <property type="term" value="C:nucleolus"/>
    <property type="evidence" value="ECO:0007669"/>
    <property type="project" value="UniProtKB-SubCell"/>
</dbReference>
<dbReference type="GO" id="GO:0003677">
    <property type="term" value="F:DNA binding"/>
    <property type="evidence" value="ECO:0007669"/>
    <property type="project" value="UniProtKB-KW"/>
</dbReference>
<dbReference type="GO" id="GO:0003723">
    <property type="term" value="F:RNA binding"/>
    <property type="evidence" value="ECO:0007669"/>
    <property type="project" value="UniProtKB-KW"/>
</dbReference>
<dbReference type="GO" id="GO:0006915">
    <property type="term" value="P:apoptotic process"/>
    <property type="evidence" value="ECO:0007669"/>
    <property type="project" value="UniProtKB-KW"/>
</dbReference>
<dbReference type="GO" id="GO:0000460">
    <property type="term" value="P:maturation of 5.8S rRNA"/>
    <property type="evidence" value="ECO:0007669"/>
    <property type="project" value="TreeGrafter"/>
</dbReference>
<dbReference type="GO" id="GO:0010468">
    <property type="term" value="P:regulation of gene expression"/>
    <property type="evidence" value="ECO:0007669"/>
    <property type="project" value="TreeGrafter"/>
</dbReference>
<dbReference type="InterPro" id="IPR011082">
    <property type="entry name" value="Exosome-assoc_fac/DNA_repair"/>
</dbReference>
<dbReference type="InterPro" id="IPR007146">
    <property type="entry name" value="Sas10/Utp3/C1D"/>
</dbReference>
<dbReference type="PANTHER" id="PTHR15341:SF3">
    <property type="entry name" value="NUCLEAR NUCLEIC ACID-BINDING PROTEIN C1D"/>
    <property type="match status" value="1"/>
</dbReference>
<dbReference type="PANTHER" id="PTHR15341">
    <property type="entry name" value="SUN-COR STEROID HORMONE RECEPTOR CO-REPRESSOR"/>
    <property type="match status" value="1"/>
</dbReference>
<dbReference type="Pfam" id="PF04000">
    <property type="entry name" value="Sas10_Utp3"/>
    <property type="match status" value="1"/>
</dbReference>
<protein>
    <recommendedName>
        <fullName>Nuclear nucleic acid-binding protein C1D</fullName>
    </recommendedName>
</protein>
<reference key="1">
    <citation type="submission" date="2004-11" db="EMBL/GenBank/DDBJ databases">
        <authorList>
            <consortium name="The German cDNA consortium"/>
        </authorList>
    </citation>
    <scope>NUCLEOTIDE SEQUENCE [LARGE SCALE MRNA]</scope>
    <source>
        <tissue>Heart</tissue>
    </source>
</reference>
<evidence type="ECO:0000250" key="1"/>
<evidence type="ECO:0000250" key="2">
    <source>
        <dbReference type="UniProtKB" id="O35473"/>
    </source>
</evidence>
<evidence type="ECO:0000250" key="3">
    <source>
        <dbReference type="UniProtKB" id="Q13901"/>
    </source>
</evidence>
<evidence type="ECO:0000305" key="4"/>
<sequence>MAGEEINEDYPVEIHEYLSAFENSIGAVDEMLKTMMSVSRNELLQKLDPLEQAKVDLVSAYTLNSMFWVYLATQGVNPKEHPVKQELERIRVYMNRVKEITDKKKAGKLDRGAASRFVKNALWEPKPKNASKVANKGKSKS</sequence>
<gene>
    <name type="primary">C1D</name>
</gene>
<comment type="function">
    <text evidence="2 3">Plays a role in the recruitment of the exosome to pre-rRNA to mediate the 3'-5' end processing of the 5.8S rRNA. Forms a multi-subunit complex with MPHOSPH6 and EXOSC10 and this complex along with MTR4 is required for the 3'-5' end processing of the 5.8S rRNA. Can activate PRKDC not only in the presence of linear DNA but also in the presence of supercoiled DNA. Can induce apoptosis in a p53/TP53 dependent manner. May regulate the TRAX/TSN complex formation. Potentiates transcriptional repression by NR1D1 and THRB (By similarity).</text>
</comment>
<comment type="subunit">
    <text evidence="2 3">Monomer and homodimer. Interacts with NR1D1, THRA, THRB, NCOR1 and NCOR2. Associates with the RNA exosome complex (By similarity). Interacts with EXOSC10; the interaction probably mediates the association with the nuclear form of the RNA exosome. The homodimeric form interacts with TSNAX following gamma-radiation. Interacts with RAC3.</text>
</comment>
<comment type="subcellular location">
    <subcellularLocation>
        <location evidence="3">Nucleus</location>
    </subcellularLocation>
    <subcellularLocation>
        <location evidence="3">Cytoplasm</location>
    </subcellularLocation>
    <subcellularLocation>
        <location evidence="3">Nucleus</location>
        <location evidence="3">Nucleolus</location>
    </subcellularLocation>
    <text evidence="3">EXOSC10 is required for nucleolar localization. Colocalizes with TSNAX in the nucleus.</text>
</comment>
<comment type="PTM">
    <text evidence="3">Phosphorylated by PRKDC.</text>
</comment>
<comment type="similarity">
    <text evidence="4">Belongs to the C1D family.</text>
</comment>
<proteinExistence type="evidence at transcript level"/>